<sequence>MEHQQNHTFSADTGKLLKLMIHSLYSNKEIFLRELVSNAADAADKLRFKALSDGSLFENDGDLRVRLSFDADLKTITISDNGIGMSRDEVIEHLGTIAKSGTSDFFEQLSGDQVKDSQLIGQFGVGFYSSFIVADKVTVNTRKAGEPASQGTCWISTGESDYTVADIEKAGRGTEITLHLRDDETEFLNDYKLRGIVSKYSDHISIPVEMFKEATEESEGSDGEKVPATEATWEAVNKATALWSCSKSELKDEEYKEFYKHIANDFEDPLTWSHNKVEGEQAYTSLLYIPKRAPYDLWNREKAHGLKLYVQRVFVMDDAEQFMPTYLRFVKGVLDSNDLPLNVSREILQDTRVTAKLRSGCTKRVLDLLTKLAKKDDDAYNLFWKEFGQVLKEGPAEDSSNKEKIGKLFRFSSTETDSTEQTVSLDAYISRMTEGQDKIYYITADSFNAAKNSPHLEVLREKGIEVLLLSDRIDEWLLSHLPEYDGKTFTSVTQGDLDLGKLDSEEKKKEQEKQETEFASFVERVKAVLGDKVKDVRLTHRLTSTPSCIVADNDDMSTQMAKLMAQMGQPVPESKPVFELNPEHVMIVKLADMADEDLFAQWSELLLEQAILSEKGSLDDPSEFVGRINKLLLA</sequence>
<evidence type="ECO:0000255" key="1">
    <source>
        <dbReference type="HAMAP-Rule" id="MF_00505"/>
    </source>
</evidence>
<dbReference type="EMBL" id="CP000510">
    <property type="protein sequence ID" value="ABM02797.1"/>
    <property type="molecule type" value="Genomic_DNA"/>
</dbReference>
<dbReference type="RefSeq" id="WP_011769360.1">
    <property type="nucleotide sequence ID" value="NC_008709.1"/>
</dbReference>
<dbReference type="SMR" id="A1STI2"/>
<dbReference type="STRING" id="357804.Ping_0956"/>
<dbReference type="KEGG" id="pin:Ping_0956"/>
<dbReference type="eggNOG" id="COG0326">
    <property type="taxonomic scope" value="Bacteria"/>
</dbReference>
<dbReference type="HOGENOM" id="CLU_006684_3_0_6"/>
<dbReference type="OrthoDB" id="9802640at2"/>
<dbReference type="Proteomes" id="UP000000639">
    <property type="component" value="Chromosome"/>
</dbReference>
<dbReference type="GO" id="GO:0005737">
    <property type="term" value="C:cytoplasm"/>
    <property type="evidence" value="ECO:0007669"/>
    <property type="project" value="UniProtKB-SubCell"/>
</dbReference>
<dbReference type="GO" id="GO:0005524">
    <property type="term" value="F:ATP binding"/>
    <property type="evidence" value="ECO:0007669"/>
    <property type="project" value="UniProtKB-UniRule"/>
</dbReference>
<dbReference type="GO" id="GO:0016887">
    <property type="term" value="F:ATP hydrolysis activity"/>
    <property type="evidence" value="ECO:0007669"/>
    <property type="project" value="InterPro"/>
</dbReference>
<dbReference type="GO" id="GO:0140662">
    <property type="term" value="F:ATP-dependent protein folding chaperone"/>
    <property type="evidence" value="ECO:0007669"/>
    <property type="project" value="InterPro"/>
</dbReference>
<dbReference type="GO" id="GO:0051082">
    <property type="term" value="F:unfolded protein binding"/>
    <property type="evidence" value="ECO:0007669"/>
    <property type="project" value="UniProtKB-UniRule"/>
</dbReference>
<dbReference type="CDD" id="cd16927">
    <property type="entry name" value="HATPase_Hsp90-like"/>
    <property type="match status" value="1"/>
</dbReference>
<dbReference type="FunFam" id="3.30.230.80:FF:000002">
    <property type="entry name" value="Molecular chaperone HtpG"/>
    <property type="match status" value="1"/>
</dbReference>
<dbReference type="FunFam" id="3.30.565.10:FF:000009">
    <property type="entry name" value="Molecular chaperone HtpG"/>
    <property type="match status" value="1"/>
</dbReference>
<dbReference type="Gene3D" id="3.30.230.80">
    <property type="match status" value="1"/>
</dbReference>
<dbReference type="Gene3D" id="3.40.50.11260">
    <property type="match status" value="1"/>
</dbReference>
<dbReference type="Gene3D" id="1.20.120.790">
    <property type="entry name" value="Heat shock protein 90, C-terminal domain"/>
    <property type="match status" value="1"/>
</dbReference>
<dbReference type="Gene3D" id="3.30.565.10">
    <property type="entry name" value="Histidine kinase-like ATPase, C-terminal domain"/>
    <property type="match status" value="1"/>
</dbReference>
<dbReference type="HAMAP" id="MF_00505">
    <property type="entry name" value="HSP90"/>
    <property type="match status" value="1"/>
</dbReference>
<dbReference type="InterPro" id="IPR036890">
    <property type="entry name" value="HATPase_C_sf"/>
</dbReference>
<dbReference type="InterPro" id="IPR019805">
    <property type="entry name" value="Heat_shock_protein_90_CS"/>
</dbReference>
<dbReference type="InterPro" id="IPR037196">
    <property type="entry name" value="HSP90_C"/>
</dbReference>
<dbReference type="InterPro" id="IPR001404">
    <property type="entry name" value="Hsp90_fam"/>
</dbReference>
<dbReference type="InterPro" id="IPR020575">
    <property type="entry name" value="Hsp90_N"/>
</dbReference>
<dbReference type="InterPro" id="IPR020568">
    <property type="entry name" value="Ribosomal_Su5_D2-typ_SF"/>
</dbReference>
<dbReference type="NCBIfam" id="NF003555">
    <property type="entry name" value="PRK05218.1"/>
    <property type="match status" value="1"/>
</dbReference>
<dbReference type="PANTHER" id="PTHR11528">
    <property type="entry name" value="HEAT SHOCK PROTEIN 90 FAMILY MEMBER"/>
    <property type="match status" value="1"/>
</dbReference>
<dbReference type="Pfam" id="PF13589">
    <property type="entry name" value="HATPase_c_3"/>
    <property type="match status" value="1"/>
</dbReference>
<dbReference type="Pfam" id="PF00183">
    <property type="entry name" value="HSP90"/>
    <property type="match status" value="1"/>
</dbReference>
<dbReference type="PIRSF" id="PIRSF002583">
    <property type="entry name" value="Hsp90"/>
    <property type="match status" value="1"/>
</dbReference>
<dbReference type="PRINTS" id="PR00775">
    <property type="entry name" value="HEATSHOCK90"/>
</dbReference>
<dbReference type="SMART" id="SM00387">
    <property type="entry name" value="HATPase_c"/>
    <property type="match status" value="1"/>
</dbReference>
<dbReference type="SUPFAM" id="SSF55874">
    <property type="entry name" value="ATPase domain of HSP90 chaperone/DNA topoisomerase II/histidine kinase"/>
    <property type="match status" value="1"/>
</dbReference>
<dbReference type="SUPFAM" id="SSF110942">
    <property type="entry name" value="HSP90 C-terminal domain"/>
    <property type="match status" value="1"/>
</dbReference>
<dbReference type="SUPFAM" id="SSF54211">
    <property type="entry name" value="Ribosomal protein S5 domain 2-like"/>
    <property type="match status" value="1"/>
</dbReference>
<dbReference type="PROSITE" id="PS00298">
    <property type="entry name" value="HSP90"/>
    <property type="match status" value="1"/>
</dbReference>
<keyword id="KW-0067">ATP-binding</keyword>
<keyword id="KW-0143">Chaperone</keyword>
<keyword id="KW-0963">Cytoplasm</keyword>
<keyword id="KW-0547">Nucleotide-binding</keyword>
<keyword id="KW-1185">Reference proteome</keyword>
<keyword id="KW-0346">Stress response</keyword>
<protein>
    <recommendedName>
        <fullName evidence="1">Chaperone protein HtpG</fullName>
    </recommendedName>
    <alternativeName>
        <fullName evidence="1">Heat shock protein HtpG</fullName>
    </alternativeName>
    <alternativeName>
        <fullName evidence="1">High temperature protein G</fullName>
    </alternativeName>
</protein>
<comment type="function">
    <text evidence="1">Molecular chaperone. Has ATPase activity.</text>
</comment>
<comment type="subunit">
    <text evidence="1">Homodimer.</text>
</comment>
<comment type="subcellular location">
    <subcellularLocation>
        <location evidence="1">Cytoplasm</location>
    </subcellularLocation>
</comment>
<comment type="similarity">
    <text evidence="1">Belongs to the heat shock protein 90 family.</text>
</comment>
<gene>
    <name evidence="1" type="primary">htpG</name>
    <name type="ordered locus">Ping_0956</name>
</gene>
<reference key="1">
    <citation type="journal article" date="2008" name="BMC Genomics">
        <title>Genomics of an extreme psychrophile, Psychromonas ingrahamii.</title>
        <authorList>
            <person name="Riley M."/>
            <person name="Staley J.T."/>
            <person name="Danchin A."/>
            <person name="Wang T.Z."/>
            <person name="Brettin T.S."/>
            <person name="Hauser L.J."/>
            <person name="Land M.L."/>
            <person name="Thompson L.S."/>
        </authorList>
    </citation>
    <scope>NUCLEOTIDE SEQUENCE [LARGE SCALE GENOMIC DNA]</scope>
    <source>
        <strain>DSM 17664 / CCUG 51855 / 37</strain>
    </source>
</reference>
<name>HTPG_PSYIN</name>
<feature type="chain" id="PRO_1000014941" description="Chaperone protein HtpG">
    <location>
        <begin position="1"/>
        <end position="634"/>
    </location>
</feature>
<feature type="region of interest" description="A; substrate-binding" evidence="1">
    <location>
        <begin position="1"/>
        <end position="345"/>
    </location>
</feature>
<feature type="region of interest" description="B" evidence="1">
    <location>
        <begin position="346"/>
        <end position="562"/>
    </location>
</feature>
<feature type="region of interest" description="C" evidence="1">
    <location>
        <begin position="563"/>
        <end position="634"/>
    </location>
</feature>
<proteinExistence type="inferred from homology"/>
<organism>
    <name type="scientific">Psychromonas ingrahamii (strain DSM 17664 / CCUG 51855 / 37)</name>
    <dbReference type="NCBI Taxonomy" id="357804"/>
    <lineage>
        <taxon>Bacteria</taxon>
        <taxon>Pseudomonadati</taxon>
        <taxon>Pseudomonadota</taxon>
        <taxon>Gammaproteobacteria</taxon>
        <taxon>Alteromonadales</taxon>
        <taxon>Psychromonadaceae</taxon>
        <taxon>Psychromonas</taxon>
    </lineage>
</organism>
<accession>A1STI2</accession>